<reference key="1">
    <citation type="journal article" date="1999" name="AIDS Res. Hum. Retroviruses">
        <title>Virtually full-length sequences of HIV type 1 subtype J reference strains.</title>
        <authorList>
            <person name="Laukkanen T."/>
            <person name="Albert J."/>
            <person name="Liitsola K."/>
            <person name="Green S.D."/>
            <person name="Carr J.K."/>
            <person name="Leitner T."/>
            <person name="McCutchan F.E."/>
            <person name="Salminen M.O."/>
        </authorList>
    </citation>
    <scope>NUCLEOTIDE SEQUENCE [GENOMIC RNA]</scope>
</reference>
<dbReference type="EMBL" id="AF082395">
    <property type="protein sequence ID" value="AAD17767.1"/>
    <property type="molecule type" value="Genomic_DNA"/>
</dbReference>
<dbReference type="SMR" id="Q9WC64"/>
<dbReference type="Proteomes" id="UP000123434">
    <property type="component" value="Segment"/>
</dbReference>
<dbReference type="GO" id="GO:0030430">
    <property type="term" value="C:host cell cytoplasm"/>
    <property type="evidence" value="ECO:0007669"/>
    <property type="project" value="UniProtKB-SubCell"/>
</dbReference>
<dbReference type="GO" id="GO:0020002">
    <property type="term" value="C:host cell plasma membrane"/>
    <property type="evidence" value="ECO:0007669"/>
    <property type="project" value="UniProtKB-SubCell"/>
</dbReference>
<dbReference type="GO" id="GO:0016020">
    <property type="term" value="C:membrane"/>
    <property type="evidence" value="ECO:0007669"/>
    <property type="project" value="UniProtKB-UniRule"/>
</dbReference>
<dbReference type="GO" id="GO:0044423">
    <property type="term" value="C:virion component"/>
    <property type="evidence" value="ECO:0007669"/>
    <property type="project" value="UniProtKB-UniRule"/>
</dbReference>
<dbReference type="GO" id="GO:0046872">
    <property type="term" value="F:metal ion binding"/>
    <property type="evidence" value="ECO:0007669"/>
    <property type="project" value="UniProtKB-KW"/>
</dbReference>
<dbReference type="GO" id="GO:0003723">
    <property type="term" value="F:RNA binding"/>
    <property type="evidence" value="ECO:0007669"/>
    <property type="project" value="UniProtKB-UniRule"/>
</dbReference>
<dbReference type="GO" id="GO:0019058">
    <property type="term" value="P:viral life cycle"/>
    <property type="evidence" value="ECO:0007669"/>
    <property type="project" value="InterPro"/>
</dbReference>
<dbReference type="HAMAP" id="MF_04081">
    <property type="entry name" value="HIV_VIF"/>
    <property type="match status" value="1"/>
</dbReference>
<dbReference type="InterPro" id="IPR000475">
    <property type="entry name" value="Vif"/>
</dbReference>
<dbReference type="Pfam" id="PF00559">
    <property type="entry name" value="Vif"/>
    <property type="match status" value="1"/>
</dbReference>
<dbReference type="PRINTS" id="PR00349">
    <property type="entry name" value="VIRIONINFFCT"/>
</dbReference>
<protein>
    <recommendedName>
        <fullName evidence="2">Virion infectivity factor</fullName>
        <shortName evidence="2">Vif</shortName>
    </recommendedName>
    <alternativeName>
        <fullName evidence="2">SOR protein</fullName>
    </alternativeName>
    <component>
        <recommendedName>
            <fullName evidence="2">p17</fullName>
        </recommendedName>
    </component>
    <component>
        <recommendedName>
            <fullName evidence="2">p7</fullName>
        </recommendedName>
    </component>
</protein>
<organism>
    <name type="scientific">Human immunodeficiency virus type 1 group M subtype J (isolate SE9173)</name>
    <name type="common">HIV-1</name>
    <dbReference type="NCBI Taxonomy" id="388904"/>
    <lineage>
        <taxon>Viruses</taxon>
        <taxon>Riboviria</taxon>
        <taxon>Pararnavirae</taxon>
        <taxon>Artverviricota</taxon>
        <taxon>Revtraviricetes</taxon>
        <taxon>Ortervirales</taxon>
        <taxon>Retroviridae</taxon>
        <taxon>Orthoretrovirinae</taxon>
        <taxon>Lentivirus</taxon>
        <taxon>Human immunodeficiency virus type 1</taxon>
    </lineage>
</organism>
<accession>Q9WC64</accession>
<feature type="chain" id="PRO_0000245138" description="Virion infectivity factor" evidence="2">
    <location>
        <begin position="1"/>
        <end position="192"/>
    </location>
</feature>
<feature type="chain" id="PRO_0000245139" description="p17" evidence="2">
    <location>
        <begin position="1"/>
        <end position="150"/>
    </location>
</feature>
<feature type="chain" id="PRO_0000245140" description="p7" evidence="2">
    <location>
        <begin position="151"/>
        <end position="192"/>
    </location>
</feature>
<feature type="region of interest" description="Interaction with host APOBEC3F; F1-box" evidence="2">
    <location>
        <begin position="14"/>
        <end position="17"/>
    </location>
</feature>
<feature type="region of interest" description="Interaction with host APOBEC3G; G-box" evidence="2">
    <location>
        <begin position="40"/>
        <end position="44"/>
    </location>
</feature>
<feature type="region of interest" description="Interaction with host APOBEC3F and APOBEC3G; FG-box" evidence="2">
    <location>
        <begin position="54"/>
        <end position="72"/>
    </location>
</feature>
<feature type="region of interest" description="Interaction with host APOBEC3F; F2-box" evidence="2">
    <location>
        <begin position="74"/>
        <end position="79"/>
    </location>
</feature>
<feature type="region of interest" description="RNA-binding" evidence="2">
    <location>
        <begin position="75"/>
        <end position="114"/>
    </location>
</feature>
<feature type="region of interest" description="SOCS box-like" evidence="2">
    <location>
        <begin position="151"/>
        <end position="180"/>
    </location>
</feature>
<feature type="region of interest" description="Multimerization" evidence="2">
    <location>
        <begin position="151"/>
        <end position="164"/>
    </location>
</feature>
<feature type="region of interest" description="Disordered" evidence="3">
    <location>
        <begin position="159"/>
        <end position="192"/>
    </location>
</feature>
<feature type="region of interest" description="Membrane association" evidence="2">
    <location>
        <begin position="171"/>
        <end position="172"/>
    </location>
</feature>
<feature type="short sequence motif" description="HCCH motif" evidence="2">
    <location>
        <begin position="108"/>
        <end position="139"/>
    </location>
</feature>
<feature type="short sequence motif" description="BC-box-like motif" evidence="2">
    <location>
        <begin position="144"/>
        <end position="153"/>
    </location>
</feature>
<feature type="compositionally biased region" description="Basic and acidic residues" evidence="3">
    <location>
        <begin position="169"/>
        <end position="192"/>
    </location>
</feature>
<feature type="binding site" evidence="2">
    <location>
        <position position="108"/>
    </location>
    <ligand>
        <name>Zn(2+)</name>
        <dbReference type="ChEBI" id="CHEBI:29105"/>
    </ligand>
</feature>
<feature type="binding site" evidence="2">
    <location>
        <position position="114"/>
    </location>
    <ligand>
        <name>Zn(2+)</name>
        <dbReference type="ChEBI" id="CHEBI:29105"/>
    </ligand>
</feature>
<feature type="binding site" evidence="2">
    <location>
        <position position="133"/>
    </location>
    <ligand>
        <name>Zn(2+)</name>
        <dbReference type="ChEBI" id="CHEBI:29105"/>
    </ligand>
</feature>
<feature type="binding site" evidence="2">
    <location>
        <position position="139"/>
    </location>
    <ligand>
        <name>Zn(2+)</name>
        <dbReference type="ChEBI" id="CHEBI:29105"/>
    </ligand>
</feature>
<feature type="site" description="Cleavage in virion (by viral protease)" evidence="2">
    <location>
        <begin position="150"/>
        <end position="151"/>
    </location>
</feature>
<feature type="modified residue" description="Phosphothreonine; by host MAP4K1" evidence="2">
    <location>
        <position position="96"/>
    </location>
</feature>
<feature type="modified residue" description="Phosphoserine; by host" evidence="2">
    <location>
        <position position="144"/>
    </location>
</feature>
<feature type="modified residue" description="Phosphoserine; by host MAP4K1" evidence="2">
    <location>
        <position position="165"/>
    </location>
</feature>
<feature type="modified residue" description="Phosphothreonine; by host" evidence="2">
    <location>
        <position position="188"/>
    </location>
</feature>
<keyword id="KW-0014">AIDS</keyword>
<keyword id="KW-1032">Host cell membrane</keyword>
<keyword id="KW-1035">Host cytoplasm</keyword>
<keyword id="KW-1043">Host membrane</keyword>
<keyword id="KW-0945">Host-virus interaction</keyword>
<keyword id="KW-0472">Membrane</keyword>
<keyword id="KW-0479">Metal-binding</keyword>
<keyword id="KW-0597">Phosphoprotein</keyword>
<keyword id="KW-0694">RNA-binding</keyword>
<keyword id="KW-0832">Ubl conjugation</keyword>
<keyword id="KW-0833">Ubl conjugation pathway</keyword>
<keyword id="KW-0946">Virion</keyword>
<keyword id="KW-0862">Zinc</keyword>
<gene>
    <name evidence="2" type="primary">vif</name>
</gene>
<name>VIF_HV1S9</name>
<sequence>MENRWQVMIVWQVDRMRINTWKSLVKYHMNVSKKARQWLYRHHYDSRHPKISSEVHIPLGEARLVVTTYWGLQTGERDWHLGQGVSIEWRRKRYRTQVDPGLADQLIHMHYFDCFSDSAIRKAILGQIVSPRCDYQAGHNKVGSLQYLALTALIKPKRRKPPLPSVQKLVEDRWNKPQKTRDHRESHTMNGH</sequence>
<organismHost>
    <name type="scientific">Homo sapiens</name>
    <name type="common">Human</name>
    <dbReference type="NCBI Taxonomy" id="9606"/>
</organismHost>
<proteinExistence type="inferred from homology"/>
<comment type="function">
    <text evidence="2">Counteracts the innate antiviral activity of host APOBEC3F and APOBEC3G by promoting their ubiquitination and degradation. Acts as a substrate recognition component of an E3 ubiquitin-protein ligase complex: mechanistically, Vif hijacks a host cullin-5-RING E3 ubiquitin-protein ligase complex (ECS complex) and the transcription coactivator CBFB/CBF-beta to form an active E3 ubiquitin-protein ligase complex that targets APOBEC3G and APOBEC3F for polyubiquitination, leading to their degradation by the proteasome. Vif interaction with APOBEC3G also blocks its cytidine deaminase activity in a proteasome-independent manner, suggesting a dual inhibitory mechanism. May interact directly with APOBEC3G mRNA in order to inhibit its translation. Association with CBFB/CBF-beta also inhibits the transcription coactivator activity of CBFB/CBF-beta. Seems to play a role in viral morphology by affecting the stability of the viral nucleoprotein core. Finally, Vif also contributes to the G2 cell cycle arrest observed in HIV infected cells.</text>
</comment>
<comment type="subunit">
    <text evidence="1">Homomultimer; in vitro and presumably in vivo. Interacts with viral RNA and Pr55Gag precursor; these interactions mediate Vif incorporation into the virion. Interacts with the viral reverse transcriptase. Forms cullin-5-RING E3 ubiquitin-protein ligase complex (ECS complex) by interacting with host CUL5, RBX2, elongin BC complex (ELOB and ELOC) and CBFB/CBF-beta. Within the ECS complex, Vif interacts directly with host CUL5, ELOC and APOBEC (APOBEC3F and APOBEC3G) substrates. The ECS complex also contains some single-stranded RNA (ssRNA) that acts as a glue that bridges Vif with APOBEC (APOBEC3F and APOBEC3G) substrates. Interacts with host UBCE7IP1 isoform 3/ZIN and possibly with SAT. Interacts with host tyrosine kinases HCK and FYN; these interactions may decrease level of phosphorylated APOBEC3G incorporation into virions. Interacts with host ABCE1; this interaction may play a role in protecting viral RNA from damage during viral assembly. Interacts with host MDM2; this interaction targets Vif for degradation by the proteasome.</text>
</comment>
<comment type="subcellular location">
    <subcellularLocation>
        <location evidence="2">Host cytoplasm</location>
    </subcellularLocation>
    <subcellularLocation>
        <location evidence="2">Host cell membrane</location>
        <topology evidence="2">Peripheral membrane protein</topology>
        <orientation evidence="2">Cytoplasmic side</orientation>
    </subcellularLocation>
    <subcellularLocation>
        <location evidence="2">Virion</location>
    </subcellularLocation>
    <text evidence="2">In the cytoplasm, seems to colocalize with intermediate filament vimentin. A fraction is associated with the cytoplasmic side of cellular membranes, presumably via the interaction with Pr55Gag precursor. Incorporated in virions at a ratio of approximately 7 to 20 molecules per virion.</text>
</comment>
<comment type="induction">
    <text evidence="2">Expressed late during infection in a Rev-dependent manner.</text>
</comment>
<comment type="domain">
    <text evidence="2">The BC-like-box motif mediates the interaction with elongin BC complex.</text>
</comment>
<comment type="domain">
    <text evidence="2">The HCCH motif (H-x(5)-C-x(18)-C-x(5)-H) mediates the interaction with CUL5.</text>
</comment>
<comment type="PTM">
    <text evidence="2">Processed in virion by the viral protease.</text>
</comment>
<comment type="PTM">
    <text evidence="2">Highly phosphorylated on serine and threonine residues.</text>
</comment>
<comment type="PTM">
    <text evidence="2">Polyubiquitinated and degraded by the proteasome in the presence of APOBEC3G.</text>
</comment>
<comment type="miscellaneous">
    <text evidence="2">Vif-defective viruses show catastrophic failure in reverse transcription due to APOBEC-induced mutations that initiate a DNA base repair pathway and compromise the structural integrity of the ssDNA. In the absence of Vif, the virion is morphologically abnormal.</text>
</comment>
<comment type="miscellaneous">
    <text evidence="2">HIV-1 lineages are divided in three main groups, M (for Major), O (for Outlier), and N (for New, or Non-M, Non-O). The vast majority of strains found worldwide belong to the group M. Group O seems to be endemic to and largely confined to Cameroon and neighboring countries in West Central Africa, where these viruses represent a small minority of HIV-1 strains. The group N is represented by a limited number of isolates from Cameroonian persons. The group M is further subdivided in 9 clades or subtypes (A to D, F to H, J and K).</text>
</comment>
<comment type="miscellaneous">
    <text evidence="2">Required for replication in 'nonpermissive' cells, including primary T-cells, macrophages and certain T-cell lines, but is dispensable for replication in 'permissive' cell lines, such as 293T cells. In nonpermissive cells, Vif-defective viruses can produce virions, but they fail to complete reverse transcription and cannot successfully infect new cells.</text>
</comment>
<comment type="similarity">
    <text evidence="2">Belongs to the primate lentivirus group Vif protein family.</text>
</comment>
<evidence type="ECO:0000250" key="1">
    <source>
        <dbReference type="UniProtKB" id="O70897"/>
    </source>
</evidence>
<evidence type="ECO:0000255" key="2">
    <source>
        <dbReference type="HAMAP-Rule" id="MF_04081"/>
    </source>
</evidence>
<evidence type="ECO:0000256" key="3">
    <source>
        <dbReference type="SAM" id="MobiDB-lite"/>
    </source>
</evidence>